<reference key="1">
    <citation type="journal article" date="2005" name="Genome Res.">
        <title>Sequence, annotation, and analysis of synteny between rice chromosome 3 and diverged grass species.</title>
        <authorList>
            <consortium name="The rice chromosome 3 sequencing consortium"/>
            <person name="Buell C.R."/>
            <person name="Yuan Q."/>
            <person name="Ouyang S."/>
            <person name="Liu J."/>
            <person name="Zhu W."/>
            <person name="Wang A."/>
            <person name="Maiti R."/>
            <person name="Haas B."/>
            <person name="Wortman J."/>
            <person name="Pertea M."/>
            <person name="Jones K.M."/>
            <person name="Kim M."/>
            <person name="Overton L."/>
            <person name="Tsitrin T."/>
            <person name="Fadrosh D."/>
            <person name="Bera J."/>
            <person name="Weaver B."/>
            <person name="Jin S."/>
            <person name="Johri S."/>
            <person name="Reardon M."/>
            <person name="Webb K."/>
            <person name="Hill J."/>
            <person name="Moffat K."/>
            <person name="Tallon L."/>
            <person name="Van Aken S."/>
            <person name="Lewis M."/>
            <person name="Utterback T."/>
            <person name="Feldblyum T."/>
            <person name="Zismann V."/>
            <person name="Iobst S."/>
            <person name="Hsiao J."/>
            <person name="de Vazeille A.R."/>
            <person name="Salzberg S.L."/>
            <person name="White O."/>
            <person name="Fraser C.M."/>
            <person name="Yu Y."/>
            <person name="Kim H."/>
            <person name="Rambo T."/>
            <person name="Currie J."/>
            <person name="Collura K."/>
            <person name="Kernodle-Thompson S."/>
            <person name="Wei F."/>
            <person name="Kudrna K."/>
            <person name="Ammiraju J.S.S."/>
            <person name="Luo M."/>
            <person name="Goicoechea J.L."/>
            <person name="Wing R.A."/>
            <person name="Henry D."/>
            <person name="Oates R."/>
            <person name="Palmer M."/>
            <person name="Pries G."/>
            <person name="Saski C."/>
            <person name="Simmons J."/>
            <person name="Soderlund C."/>
            <person name="Nelson W."/>
            <person name="de la Bastide M."/>
            <person name="Spiegel L."/>
            <person name="Nascimento L."/>
            <person name="Huang E."/>
            <person name="Preston R."/>
            <person name="Zutavern T."/>
            <person name="Palmer L."/>
            <person name="O'Shaughnessy A."/>
            <person name="Dike S."/>
            <person name="McCombie W.R."/>
            <person name="Minx P."/>
            <person name="Cordum H."/>
            <person name="Wilson R."/>
            <person name="Jin W."/>
            <person name="Lee H.R."/>
            <person name="Jiang J."/>
            <person name="Jackson S."/>
        </authorList>
    </citation>
    <scope>NUCLEOTIDE SEQUENCE [LARGE SCALE GENOMIC DNA]</scope>
    <source>
        <strain>cv. Nipponbare</strain>
    </source>
</reference>
<reference key="2">
    <citation type="journal article" date="2005" name="Nature">
        <title>The map-based sequence of the rice genome.</title>
        <authorList>
            <consortium name="International rice genome sequencing project (IRGSP)"/>
        </authorList>
    </citation>
    <scope>NUCLEOTIDE SEQUENCE [LARGE SCALE GENOMIC DNA]</scope>
    <source>
        <strain>cv. Nipponbare</strain>
    </source>
</reference>
<reference key="3">
    <citation type="journal article" date="2008" name="Nucleic Acids Res.">
        <title>The rice annotation project database (RAP-DB): 2008 update.</title>
        <authorList>
            <consortium name="The rice annotation project (RAP)"/>
        </authorList>
    </citation>
    <scope>GENOME REANNOTATION</scope>
    <source>
        <strain>cv. Nipponbare</strain>
    </source>
</reference>
<reference key="4">
    <citation type="journal article" date="2013" name="Rice">
        <title>Improvement of the Oryza sativa Nipponbare reference genome using next generation sequence and optical map data.</title>
        <authorList>
            <person name="Kawahara Y."/>
            <person name="de la Bastide M."/>
            <person name="Hamilton J.P."/>
            <person name="Kanamori H."/>
            <person name="McCombie W.R."/>
            <person name="Ouyang S."/>
            <person name="Schwartz D.C."/>
            <person name="Tanaka T."/>
            <person name="Wu J."/>
            <person name="Zhou S."/>
            <person name="Childs K.L."/>
            <person name="Davidson R.M."/>
            <person name="Lin H."/>
            <person name="Quesada-Ocampo L."/>
            <person name="Vaillancourt B."/>
            <person name="Sakai H."/>
            <person name="Lee S.S."/>
            <person name="Kim J."/>
            <person name="Numa H."/>
            <person name="Itoh T."/>
            <person name="Buell C.R."/>
            <person name="Matsumoto T."/>
        </authorList>
    </citation>
    <scope>GENOME REANNOTATION</scope>
    <source>
        <strain>cv. Nipponbare</strain>
    </source>
</reference>
<reference key="5">
    <citation type="journal article" date="2005" name="PLoS Biol.">
        <title>The genomes of Oryza sativa: a history of duplications.</title>
        <authorList>
            <person name="Yu J."/>
            <person name="Wang J."/>
            <person name="Lin W."/>
            <person name="Li S."/>
            <person name="Li H."/>
            <person name="Zhou J."/>
            <person name="Ni P."/>
            <person name="Dong W."/>
            <person name="Hu S."/>
            <person name="Zeng C."/>
            <person name="Zhang J."/>
            <person name="Zhang Y."/>
            <person name="Li R."/>
            <person name="Xu Z."/>
            <person name="Li S."/>
            <person name="Li X."/>
            <person name="Zheng H."/>
            <person name="Cong L."/>
            <person name="Lin L."/>
            <person name="Yin J."/>
            <person name="Geng J."/>
            <person name="Li G."/>
            <person name="Shi J."/>
            <person name="Liu J."/>
            <person name="Lv H."/>
            <person name="Li J."/>
            <person name="Wang J."/>
            <person name="Deng Y."/>
            <person name="Ran L."/>
            <person name="Shi X."/>
            <person name="Wang X."/>
            <person name="Wu Q."/>
            <person name="Li C."/>
            <person name="Ren X."/>
            <person name="Wang J."/>
            <person name="Wang X."/>
            <person name="Li D."/>
            <person name="Liu D."/>
            <person name="Zhang X."/>
            <person name="Ji Z."/>
            <person name="Zhao W."/>
            <person name="Sun Y."/>
            <person name="Zhang Z."/>
            <person name="Bao J."/>
            <person name="Han Y."/>
            <person name="Dong L."/>
            <person name="Ji J."/>
            <person name="Chen P."/>
            <person name="Wu S."/>
            <person name="Liu J."/>
            <person name="Xiao Y."/>
            <person name="Bu D."/>
            <person name="Tan J."/>
            <person name="Yang L."/>
            <person name="Ye C."/>
            <person name="Zhang J."/>
            <person name="Xu J."/>
            <person name="Zhou Y."/>
            <person name="Yu Y."/>
            <person name="Zhang B."/>
            <person name="Zhuang S."/>
            <person name="Wei H."/>
            <person name="Liu B."/>
            <person name="Lei M."/>
            <person name="Yu H."/>
            <person name="Li Y."/>
            <person name="Xu H."/>
            <person name="Wei S."/>
            <person name="He X."/>
            <person name="Fang L."/>
            <person name="Zhang Z."/>
            <person name="Zhang Y."/>
            <person name="Huang X."/>
            <person name="Su Z."/>
            <person name="Tong W."/>
            <person name="Li J."/>
            <person name="Tong Z."/>
            <person name="Li S."/>
            <person name="Ye J."/>
            <person name="Wang L."/>
            <person name="Fang L."/>
            <person name="Lei T."/>
            <person name="Chen C.-S."/>
            <person name="Chen H.-C."/>
            <person name="Xu Z."/>
            <person name="Li H."/>
            <person name="Huang H."/>
            <person name="Zhang F."/>
            <person name="Xu H."/>
            <person name="Li N."/>
            <person name="Zhao C."/>
            <person name="Li S."/>
            <person name="Dong L."/>
            <person name="Huang Y."/>
            <person name="Li L."/>
            <person name="Xi Y."/>
            <person name="Qi Q."/>
            <person name="Li W."/>
            <person name="Zhang B."/>
            <person name="Hu W."/>
            <person name="Zhang Y."/>
            <person name="Tian X."/>
            <person name="Jiao Y."/>
            <person name="Liang X."/>
            <person name="Jin J."/>
            <person name="Gao L."/>
            <person name="Zheng W."/>
            <person name="Hao B."/>
            <person name="Liu S.-M."/>
            <person name="Wang W."/>
            <person name="Yuan L."/>
            <person name="Cao M."/>
            <person name="McDermott J."/>
            <person name="Samudrala R."/>
            <person name="Wang J."/>
            <person name="Wong G.K.-S."/>
            <person name="Yang H."/>
        </authorList>
    </citation>
    <scope>NUCLEOTIDE SEQUENCE [LARGE SCALE GENOMIC DNA]</scope>
    <source>
        <strain>cv. Nipponbare</strain>
    </source>
</reference>
<reference key="6">
    <citation type="journal article" date="2003" name="Science">
        <title>Collection, mapping, and annotation of over 28,000 cDNA clones from japonica rice.</title>
        <authorList>
            <consortium name="The rice full-length cDNA consortium"/>
        </authorList>
    </citation>
    <scope>NUCLEOTIDE SEQUENCE [LARGE SCALE MRNA] (ISOFORM 1)</scope>
    <source>
        <strain>cv. Nipponbare</strain>
    </source>
</reference>
<evidence type="ECO:0000250" key="1"/>
<evidence type="ECO:0000256" key="2">
    <source>
        <dbReference type="SAM" id="MobiDB-lite"/>
    </source>
</evidence>
<evidence type="ECO:0000305" key="3"/>
<accession>Q10CT5</accession>
<accession>A3ANA2</accession>
<accession>Q9AY72</accession>
<name>NTM1_ORYSJ</name>
<dbReference type="EC" id="2.1.1.244"/>
<dbReference type="EMBL" id="AC084320">
    <property type="protein sequence ID" value="AAK09232.1"/>
    <property type="molecule type" value="Genomic_DNA"/>
</dbReference>
<dbReference type="EMBL" id="DP000009">
    <property type="protein sequence ID" value="ABF99180.1"/>
    <property type="molecule type" value="Genomic_DNA"/>
</dbReference>
<dbReference type="EMBL" id="DP000009">
    <property type="protein sequence ID" value="ABF99181.1"/>
    <property type="molecule type" value="Genomic_DNA"/>
</dbReference>
<dbReference type="EMBL" id="AP008209">
    <property type="protein sequence ID" value="BAF13368.1"/>
    <property type="molecule type" value="Genomic_DNA"/>
</dbReference>
<dbReference type="EMBL" id="AP014959">
    <property type="status" value="NOT_ANNOTATED_CDS"/>
    <property type="molecule type" value="Genomic_DNA"/>
</dbReference>
<dbReference type="EMBL" id="CM000140">
    <property type="protein sequence ID" value="EAZ28791.1"/>
    <property type="molecule type" value="Genomic_DNA"/>
</dbReference>
<dbReference type="EMBL" id="AK100619">
    <property type="protein sequence ID" value="BAG94683.1"/>
    <property type="molecule type" value="mRNA"/>
</dbReference>
<dbReference type="RefSeq" id="XP_015631086.1">
    <property type="nucleotide sequence ID" value="XM_015775600.1"/>
</dbReference>
<dbReference type="SMR" id="Q10CT5"/>
<dbReference type="FunCoup" id="Q10CT5">
    <property type="interactions" value="1814"/>
</dbReference>
<dbReference type="PaxDb" id="39947-Q10CT5"/>
<dbReference type="KEGG" id="dosa:Os03g0780900"/>
<dbReference type="eggNOG" id="KOG3178">
    <property type="taxonomic scope" value="Eukaryota"/>
</dbReference>
<dbReference type="HOGENOM" id="CLU_055356_1_0_1"/>
<dbReference type="InParanoid" id="Q10CT5"/>
<dbReference type="OrthoDB" id="1298661at2759"/>
<dbReference type="Proteomes" id="UP000000763">
    <property type="component" value="Chromosome 3"/>
</dbReference>
<dbReference type="Proteomes" id="UP000007752">
    <property type="component" value="Chromosome 3"/>
</dbReference>
<dbReference type="Proteomes" id="UP000059680">
    <property type="component" value="Chromosome 3"/>
</dbReference>
<dbReference type="GO" id="GO:0005737">
    <property type="term" value="C:cytoplasm"/>
    <property type="evidence" value="ECO:0000318"/>
    <property type="project" value="GO_Central"/>
</dbReference>
<dbReference type="GO" id="GO:0008168">
    <property type="term" value="F:methyltransferase activity"/>
    <property type="evidence" value="ECO:0000318"/>
    <property type="project" value="GO_Central"/>
</dbReference>
<dbReference type="GO" id="GO:0071885">
    <property type="term" value="F:N-terminal protein N-methyltransferase activity"/>
    <property type="evidence" value="ECO:0007669"/>
    <property type="project" value="UniProtKB-EC"/>
</dbReference>
<dbReference type="GO" id="GO:0032259">
    <property type="term" value="P:methylation"/>
    <property type="evidence" value="ECO:0007669"/>
    <property type="project" value="UniProtKB-KW"/>
</dbReference>
<dbReference type="CDD" id="cd02440">
    <property type="entry name" value="AdoMet_MTases"/>
    <property type="match status" value="1"/>
</dbReference>
<dbReference type="FunFam" id="3.40.50.150:FF:000025">
    <property type="entry name" value="N-terminal Xaa-Pro-Lys N-methyltransferase 1"/>
    <property type="match status" value="1"/>
</dbReference>
<dbReference type="Gene3D" id="3.40.50.150">
    <property type="entry name" value="Vaccinia Virus protein VP39"/>
    <property type="match status" value="1"/>
</dbReference>
<dbReference type="InterPro" id="IPR008576">
    <property type="entry name" value="MeTrfase_NTM1"/>
</dbReference>
<dbReference type="InterPro" id="IPR029063">
    <property type="entry name" value="SAM-dependent_MTases_sf"/>
</dbReference>
<dbReference type="PANTHER" id="PTHR12753">
    <property type="entry name" value="AD-003 - RELATED"/>
    <property type="match status" value="1"/>
</dbReference>
<dbReference type="PANTHER" id="PTHR12753:SF0">
    <property type="entry name" value="ALPHA N-TERMINAL PROTEIN METHYLTRANSFERASE 1"/>
    <property type="match status" value="1"/>
</dbReference>
<dbReference type="Pfam" id="PF05891">
    <property type="entry name" value="Methyltransf_PK"/>
    <property type="match status" value="1"/>
</dbReference>
<dbReference type="PIRSF" id="PIRSF016958">
    <property type="entry name" value="DUF858_MeTrfase_lik"/>
    <property type="match status" value="1"/>
</dbReference>
<dbReference type="SUPFAM" id="SSF53335">
    <property type="entry name" value="S-adenosyl-L-methionine-dependent methyltransferases"/>
    <property type="match status" value="1"/>
</dbReference>
<gene>
    <name type="ordered locus">Os03g0780900</name>
    <name type="ordered locus">LOC_Os03g56830</name>
    <name type="ORF">OsJ_12812</name>
    <name type="ORF">OSJNBa0091J19.10</name>
</gene>
<comment type="function">
    <text evidence="1">Alpha-N-methyltransferase that methylates the N-terminus of target proteins containing the N-terminal motif [Ala/Pro/Ser]-Pro-Lys when the initiator Met is cleaved. Specifically catalyzes mono-, di- or tri-methylation of exposed alpha-amino group of Ala or Ser residue in the [Ala/Ser]-Pro-Lys motif and mono- or di-methylation of Pro in the Pro-Pro-Lys motif (By similarity).</text>
</comment>
<comment type="catalytic activity">
    <reaction>
        <text>N-terminal L-alanyl-L-prolyl-L-lysyl-[protein] + 3 S-adenosyl-L-methionine = N-terminal N,N,N-trimethyl-L-alanyl-L-prolyl-L-lysyl-[protein] + 3 S-adenosyl-L-homocysteine + 3 H(+)</text>
        <dbReference type="Rhea" id="RHEA:54712"/>
        <dbReference type="Rhea" id="RHEA-COMP:13785"/>
        <dbReference type="Rhea" id="RHEA-COMP:13971"/>
        <dbReference type="ChEBI" id="CHEBI:15378"/>
        <dbReference type="ChEBI" id="CHEBI:57856"/>
        <dbReference type="ChEBI" id="CHEBI:59789"/>
        <dbReference type="ChEBI" id="CHEBI:138057"/>
        <dbReference type="ChEBI" id="CHEBI:138315"/>
        <dbReference type="EC" id="2.1.1.244"/>
    </reaction>
</comment>
<comment type="catalytic activity">
    <reaction>
        <text>N-terminal L-seryl-L-prolyl-L-lysyl-[protein] + 3 S-adenosyl-L-methionine = N-terminal N,N,N-trimethyl-L-seryl-L-prolyl-L-lysyl-[protein] + 3 S-adenosyl-L-homocysteine + 3 H(+)</text>
        <dbReference type="Rhea" id="RHEA:54724"/>
        <dbReference type="Rhea" id="RHEA-COMP:13789"/>
        <dbReference type="Rhea" id="RHEA-COMP:13973"/>
        <dbReference type="ChEBI" id="CHEBI:15378"/>
        <dbReference type="ChEBI" id="CHEBI:57856"/>
        <dbReference type="ChEBI" id="CHEBI:59789"/>
        <dbReference type="ChEBI" id="CHEBI:138061"/>
        <dbReference type="ChEBI" id="CHEBI:138317"/>
        <dbReference type="EC" id="2.1.1.244"/>
    </reaction>
</comment>
<comment type="catalytic activity">
    <reaction>
        <text>N-terminal L-prolyl-L-prolyl-L-lysyl-[protein] + 2 S-adenosyl-L-methionine = N-terminal N,N-dimethyl-L-prolyl-L-prolyl-L-lysyl-[protein] + 2 S-adenosyl-L-homocysteine + 2 H(+)</text>
        <dbReference type="Rhea" id="RHEA:54736"/>
        <dbReference type="Rhea" id="RHEA-COMP:13787"/>
        <dbReference type="Rhea" id="RHEA-COMP:13974"/>
        <dbReference type="ChEBI" id="CHEBI:15378"/>
        <dbReference type="ChEBI" id="CHEBI:57856"/>
        <dbReference type="ChEBI" id="CHEBI:59789"/>
        <dbReference type="ChEBI" id="CHEBI:138059"/>
        <dbReference type="ChEBI" id="CHEBI:138318"/>
        <dbReference type="EC" id="2.1.1.244"/>
    </reaction>
</comment>
<comment type="alternative products">
    <event type="alternative splicing"/>
    <isoform>
        <id>Q10CT5-1</id>
        <name>1</name>
        <sequence type="displayed"/>
    </isoform>
    <isoform>
        <id>Q10CT5-2</id>
        <name>2</name>
        <sequence type="described" ref="VSP_039907"/>
    </isoform>
</comment>
<comment type="similarity">
    <text evidence="3">Belongs to the methyltransferase superfamily. NTM1 family.</text>
</comment>
<protein>
    <recommendedName>
        <fullName>Alpha N-terminal protein methyltransferase 1</fullName>
        <ecNumber>2.1.1.244</ecNumber>
    </recommendedName>
    <alternativeName>
        <fullName>X-Pro-Lys N-terminal protein methyltransferase 1</fullName>
        <shortName>NTM1</shortName>
    </alternativeName>
</protein>
<keyword id="KW-0025">Alternative splicing</keyword>
<keyword id="KW-0489">Methyltransferase</keyword>
<keyword id="KW-1185">Reference proteome</keyword>
<keyword id="KW-0949">S-adenosyl-L-methionine</keyword>
<keyword id="KW-0808">Transferase</keyword>
<feature type="chain" id="PRO_0000399788" description="Alpha N-terminal protein methyltransferase 1">
    <location>
        <begin position="1"/>
        <end position="307"/>
    </location>
</feature>
<feature type="region of interest" description="Disordered" evidence="2">
    <location>
        <begin position="38"/>
        <end position="60"/>
    </location>
</feature>
<feature type="compositionally biased region" description="Low complexity" evidence="2">
    <location>
        <begin position="38"/>
        <end position="51"/>
    </location>
</feature>
<feature type="binding site" evidence="1">
    <location>
        <position position="123"/>
    </location>
    <ligand>
        <name>S-adenosyl-L-methionine</name>
        <dbReference type="ChEBI" id="CHEBI:59789"/>
    </ligand>
</feature>
<feature type="binding site" evidence="1">
    <location>
        <position position="128"/>
    </location>
    <ligand>
        <name>S-adenosyl-L-methionine</name>
        <dbReference type="ChEBI" id="CHEBI:59789"/>
    </ligand>
</feature>
<feature type="binding site" evidence="1">
    <location>
        <begin position="145"/>
        <end position="147"/>
    </location>
    <ligand>
        <name>S-adenosyl-L-methionine</name>
        <dbReference type="ChEBI" id="CHEBI:59789"/>
    </ligand>
</feature>
<feature type="binding site" evidence="1">
    <location>
        <begin position="179"/>
        <end position="180"/>
    </location>
    <ligand>
        <name>S-adenosyl-L-methionine</name>
        <dbReference type="ChEBI" id="CHEBI:59789"/>
    </ligand>
</feature>
<feature type="binding site" evidence="1">
    <location>
        <position position="195"/>
    </location>
    <ligand>
        <name>S-adenosyl-L-methionine</name>
        <dbReference type="ChEBI" id="CHEBI:59789"/>
    </ligand>
</feature>
<feature type="splice variant" id="VSP_039907" description="In isoform 2." evidence="3">
    <original>RMIRS</original>
    <variation>PVEKVSDNNSLSVPRFVPADFETRLELIPFVRGVSQLVSPASGPSPFTELNEFDEGCTAVTRSGTFSPLQHGAVRSGPPRRVQGPSTSARGRPWSKKPGARGGGRIPKAG</variation>
    <location>
        <begin position="303"/>
        <end position="307"/>
    </location>
</feature>
<feature type="sequence conflict" description="In Ref. 5; EAZ28791." evidence="3" ref="5">
    <original>M</original>
    <variation>I</variation>
    <location>
        <position position="19"/>
    </location>
</feature>
<organism>
    <name type="scientific">Oryza sativa subsp. japonica</name>
    <name type="common">Rice</name>
    <dbReference type="NCBI Taxonomy" id="39947"/>
    <lineage>
        <taxon>Eukaryota</taxon>
        <taxon>Viridiplantae</taxon>
        <taxon>Streptophyta</taxon>
        <taxon>Embryophyta</taxon>
        <taxon>Tracheophyta</taxon>
        <taxon>Spermatophyta</taxon>
        <taxon>Magnoliopsida</taxon>
        <taxon>Liliopsida</taxon>
        <taxon>Poales</taxon>
        <taxon>Poaceae</taxon>
        <taxon>BOP clade</taxon>
        <taxon>Oryzoideae</taxon>
        <taxon>Oryzeae</taxon>
        <taxon>Oryzinae</taxon>
        <taxon>Oryza</taxon>
        <taxon>Oryza sativa</taxon>
    </lineage>
</organism>
<sequence length="307" mass="33966">MDSRGFDSEGREFSSATEMWAHEIGAAADAPVSAAVAEPAPAPAAGSNGVAGEEEAGGGGKREEWYSKAIAYWQGVEASTEGVLGGYGCVNDVDVKGSDAFLRPLLAERFGAARRHLVALDCGSGIGRVTKNFLLRHFNEVDLVEPVSHFLEAAQENLTECMEVGEDTHKAANFYCVPLQDFTPDEGRYDVIWIQWCIGQLPDDDFISFFNRAKIGLKPNGFFVLKENIARNGFVLDKEDNSITRSDAYFKELFKKCGLYIHSIKDQSDLPKELFAVKMYALVTEKPKIQKNGKRRRPKNSPRMIRS</sequence>
<proteinExistence type="evidence at transcript level"/>